<gene>
    <name type="primary">hisF</name>
    <name type="ordered locus">PM1204</name>
</gene>
<keyword id="KW-0028">Amino-acid biosynthesis</keyword>
<keyword id="KW-0963">Cytoplasm</keyword>
<keyword id="KW-0368">Histidine biosynthesis</keyword>
<keyword id="KW-0456">Lyase</keyword>
<keyword id="KW-1185">Reference proteome</keyword>
<name>HIS6_PASMU</name>
<evidence type="ECO:0000250" key="1"/>
<evidence type="ECO:0000255" key="2"/>
<evidence type="ECO:0000305" key="3"/>
<proteinExistence type="inferred from homology"/>
<protein>
    <recommendedName>
        <fullName>Imidazole glycerol phosphate synthase subunit HisF</fullName>
        <ecNumber>4.3.2.10</ecNumber>
    </recommendedName>
    <alternativeName>
        <fullName>IGP synthase cyclase subunit</fullName>
    </alternativeName>
    <alternativeName>
        <fullName>IGP synthase subunit HisF</fullName>
    </alternativeName>
    <alternativeName>
        <fullName>ImGP synthase subunit HisF</fullName>
        <shortName>IGPS subunit HisF</shortName>
    </alternativeName>
</protein>
<dbReference type="EC" id="4.3.2.10"/>
<dbReference type="EMBL" id="AE004439">
    <property type="protein sequence ID" value="AAK03288.1"/>
    <property type="molecule type" value="Genomic_DNA"/>
</dbReference>
<dbReference type="RefSeq" id="WP_010907071.1">
    <property type="nucleotide sequence ID" value="NC_002663.1"/>
</dbReference>
<dbReference type="SMR" id="Q9CLM0"/>
<dbReference type="STRING" id="272843.PM1204"/>
<dbReference type="EnsemblBacteria" id="AAK03288">
    <property type="protein sequence ID" value="AAK03288"/>
    <property type="gene ID" value="PM1204"/>
</dbReference>
<dbReference type="KEGG" id="pmu:PM1204"/>
<dbReference type="PATRIC" id="fig|272843.6.peg.1215"/>
<dbReference type="HOGENOM" id="CLU_048577_4_0_6"/>
<dbReference type="OrthoDB" id="9781903at2"/>
<dbReference type="UniPathway" id="UPA00031">
    <property type="reaction ID" value="UER00010"/>
</dbReference>
<dbReference type="Proteomes" id="UP000000809">
    <property type="component" value="Chromosome"/>
</dbReference>
<dbReference type="GO" id="GO:0005737">
    <property type="term" value="C:cytoplasm"/>
    <property type="evidence" value="ECO:0007669"/>
    <property type="project" value="UniProtKB-SubCell"/>
</dbReference>
<dbReference type="GO" id="GO:0000107">
    <property type="term" value="F:imidazoleglycerol-phosphate synthase activity"/>
    <property type="evidence" value="ECO:0007669"/>
    <property type="project" value="UniProtKB-UniRule"/>
</dbReference>
<dbReference type="GO" id="GO:0016829">
    <property type="term" value="F:lyase activity"/>
    <property type="evidence" value="ECO:0007669"/>
    <property type="project" value="UniProtKB-KW"/>
</dbReference>
<dbReference type="GO" id="GO:0000105">
    <property type="term" value="P:L-histidine biosynthetic process"/>
    <property type="evidence" value="ECO:0007669"/>
    <property type="project" value="UniProtKB-UniRule"/>
</dbReference>
<dbReference type="CDD" id="cd04731">
    <property type="entry name" value="HisF"/>
    <property type="match status" value="1"/>
</dbReference>
<dbReference type="FunFam" id="3.20.20.70:FF:000006">
    <property type="entry name" value="Imidazole glycerol phosphate synthase subunit HisF"/>
    <property type="match status" value="1"/>
</dbReference>
<dbReference type="Gene3D" id="3.20.20.70">
    <property type="entry name" value="Aldolase class I"/>
    <property type="match status" value="1"/>
</dbReference>
<dbReference type="HAMAP" id="MF_01013">
    <property type="entry name" value="HisF"/>
    <property type="match status" value="1"/>
</dbReference>
<dbReference type="InterPro" id="IPR013785">
    <property type="entry name" value="Aldolase_TIM"/>
</dbReference>
<dbReference type="InterPro" id="IPR006062">
    <property type="entry name" value="His_biosynth"/>
</dbReference>
<dbReference type="InterPro" id="IPR004651">
    <property type="entry name" value="HisF"/>
</dbReference>
<dbReference type="InterPro" id="IPR050064">
    <property type="entry name" value="IGPS_HisA/HisF"/>
</dbReference>
<dbReference type="InterPro" id="IPR011060">
    <property type="entry name" value="RibuloseP-bd_barrel"/>
</dbReference>
<dbReference type="NCBIfam" id="TIGR00735">
    <property type="entry name" value="hisF"/>
    <property type="match status" value="1"/>
</dbReference>
<dbReference type="PANTHER" id="PTHR21235:SF2">
    <property type="entry name" value="IMIDAZOLE GLYCEROL PHOSPHATE SYNTHASE HISHF"/>
    <property type="match status" value="1"/>
</dbReference>
<dbReference type="PANTHER" id="PTHR21235">
    <property type="entry name" value="IMIDAZOLE GLYCEROL PHOSPHATE SYNTHASE SUBUNIT HISF/H IGP SYNTHASE SUBUNIT HISF/H"/>
    <property type="match status" value="1"/>
</dbReference>
<dbReference type="Pfam" id="PF00977">
    <property type="entry name" value="His_biosynth"/>
    <property type="match status" value="1"/>
</dbReference>
<dbReference type="SUPFAM" id="SSF51366">
    <property type="entry name" value="Ribulose-phoshate binding barrel"/>
    <property type="match status" value="1"/>
</dbReference>
<reference key="1">
    <citation type="journal article" date="2001" name="Proc. Natl. Acad. Sci. U.S.A.">
        <title>Complete genomic sequence of Pasteurella multocida Pm70.</title>
        <authorList>
            <person name="May B.J."/>
            <person name="Zhang Q."/>
            <person name="Li L.L."/>
            <person name="Paustian M.L."/>
            <person name="Whittam T.S."/>
            <person name="Kapur V."/>
        </authorList>
    </citation>
    <scope>NUCLEOTIDE SEQUENCE [LARGE SCALE GENOMIC DNA]</scope>
    <source>
        <strain>Pm70</strain>
    </source>
</reference>
<organism>
    <name type="scientific">Pasteurella multocida (strain Pm70)</name>
    <dbReference type="NCBI Taxonomy" id="272843"/>
    <lineage>
        <taxon>Bacteria</taxon>
        <taxon>Pseudomonadati</taxon>
        <taxon>Pseudomonadota</taxon>
        <taxon>Gammaproteobacteria</taxon>
        <taxon>Pasteurellales</taxon>
        <taxon>Pasteurellaceae</taxon>
        <taxon>Pasteurella</taxon>
    </lineage>
</organism>
<comment type="function">
    <text evidence="1">IGPS catalyzes the conversion of PRFAR and glutamine to IGP, AICAR and glutamate. The HisF subunit catalyzes the cyclization activity that produces IGP and AICAR from PRFAR using the ammonia provided by the HisH subunit (By similarity).</text>
</comment>
<comment type="catalytic activity">
    <reaction>
        <text>5-[(5-phospho-1-deoxy-D-ribulos-1-ylimino)methylamino]-1-(5-phospho-beta-D-ribosyl)imidazole-4-carboxamide + L-glutamine = D-erythro-1-(imidazol-4-yl)glycerol 3-phosphate + 5-amino-1-(5-phospho-beta-D-ribosyl)imidazole-4-carboxamide + L-glutamate + H(+)</text>
        <dbReference type="Rhea" id="RHEA:24793"/>
        <dbReference type="ChEBI" id="CHEBI:15378"/>
        <dbReference type="ChEBI" id="CHEBI:29985"/>
        <dbReference type="ChEBI" id="CHEBI:58278"/>
        <dbReference type="ChEBI" id="CHEBI:58359"/>
        <dbReference type="ChEBI" id="CHEBI:58475"/>
        <dbReference type="ChEBI" id="CHEBI:58525"/>
        <dbReference type="EC" id="4.3.2.10"/>
    </reaction>
</comment>
<comment type="pathway">
    <text>Amino-acid biosynthesis; L-histidine biosynthesis; L-histidine from 5-phospho-alpha-D-ribose 1-diphosphate: step 5/9.</text>
</comment>
<comment type="subunit">
    <text evidence="1">Heterodimer of HisH and HisF.</text>
</comment>
<comment type="subcellular location">
    <subcellularLocation>
        <location evidence="1">Cytoplasm</location>
    </subcellularLocation>
</comment>
<comment type="similarity">
    <text evidence="3">Belongs to the HisA/HisF family.</text>
</comment>
<feature type="chain" id="PRO_0000142194" description="Imidazole glycerol phosphate synthase subunit HisF">
    <location>
        <begin position="1"/>
        <end position="256"/>
    </location>
</feature>
<feature type="active site" evidence="2">
    <location>
        <position position="11"/>
    </location>
</feature>
<feature type="active site" evidence="2">
    <location>
        <position position="130"/>
    </location>
</feature>
<sequence>MLAKRIIPCLDVRDGQVVKGVQFRNHEIIGDIVPLAQRYAEEGADELVFYDITASSDGRTIDKSWVERVAQVIDIPFCVAGGIKSVEDAEKLFAFGADKISINSPALADPDLINRLADRFGVQAIVVGIDSWFEKETGKYWVNQYTGDESRTRQTHWQLLDWVKEVQQRGAGEIVLNMMNQDGVRQGYDIAQLKLVRNLCHIPLIASGGAGEMVHFRDAFIEANVDGALAASVFHKRIIDIGELKDYLRKEKIKIR</sequence>
<accession>Q9CLM0</accession>